<sequence length="127" mass="13385">MAKPTRKRRVKKNIESGIAHIHATFNNTIVMITDVHGNAIAWSSAGALGFKGSRKSTPFAAQMASEAAAKSAQEHGLKSVEVTVKGPGSGRESAIRALAAAGLEVTAIRDVTPVPHNGARPPKRRRV</sequence>
<reference key="1">
    <citation type="journal article" date="2010" name="Genome Biol.">
        <title>Structure and dynamics of the pan-genome of Streptococcus pneumoniae and closely related species.</title>
        <authorList>
            <person name="Donati C."/>
            <person name="Hiller N.L."/>
            <person name="Tettelin H."/>
            <person name="Muzzi A."/>
            <person name="Croucher N.J."/>
            <person name="Angiuoli S.V."/>
            <person name="Oggioni M."/>
            <person name="Dunning Hotopp J.C."/>
            <person name="Hu F.Z."/>
            <person name="Riley D.R."/>
            <person name="Covacci A."/>
            <person name="Mitchell T.J."/>
            <person name="Bentley S.D."/>
            <person name="Kilian M."/>
            <person name="Ehrlich G.D."/>
            <person name="Rappuoli R."/>
            <person name="Moxon E.R."/>
            <person name="Masignani V."/>
        </authorList>
    </citation>
    <scope>NUCLEOTIDE SEQUENCE [LARGE SCALE GENOMIC DNA]</scope>
    <source>
        <strain>P1031</strain>
    </source>
</reference>
<dbReference type="EMBL" id="CP000920">
    <property type="protein sequence ID" value="ACO20344.1"/>
    <property type="molecule type" value="Genomic_DNA"/>
</dbReference>
<dbReference type="RefSeq" id="WP_001118385.1">
    <property type="nucleotide sequence ID" value="NC_012467.1"/>
</dbReference>
<dbReference type="SMR" id="C1CIC2"/>
<dbReference type="GeneID" id="93964226"/>
<dbReference type="KEGG" id="spp:SPP_0285"/>
<dbReference type="HOGENOM" id="CLU_072439_5_0_9"/>
<dbReference type="GO" id="GO:1990904">
    <property type="term" value="C:ribonucleoprotein complex"/>
    <property type="evidence" value="ECO:0007669"/>
    <property type="project" value="UniProtKB-KW"/>
</dbReference>
<dbReference type="GO" id="GO:0005840">
    <property type="term" value="C:ribosome"/>
    <property type="evidence" value="ECO:0007669"/>
    <property type="project" value="UniProtKB-KW"/>
</dbReference>
<dbReference type="GO" id="GO:0019843">
    <property type="term" value="F:rRNA binding"/>
    <property type="evidence" value="ECO:0007669"/>
    <property type="project" value="UniProtKB-UniRule"/>
</dbReference>
<dbReference type="GO" id="GO:0003735">
    <property type="term" value="F:structural constituent of ribosome"/>
    <property type="evidence" value="ECO:0007669"/>
    <property type="project" value="InterPro"/>
</dbReference>
<dbReference type="GO" id="GO:0006412">
    <property type="term" value="P:translation"/>
    <property type="evidence" value="ECO:0007669"/>
    <property type="project" value="UniProtKB-UniRule"/>
</dbReference>
<dbReference type="FunFam" id="3.30.420.80:FF:000001">
    <property type="entry name" value="30S ribosomal protein S11"/>
    <property type="match status" value="1"/>
</dbReference>
<dbReference type="Gene3D" id="3.30.420.80">
    <property type="entry name" value="Ribosomal protein S11"/>
    <property type="match status" value="1"/>
</dbReference>
<dbReference type="HAMAP" id="MF_01310">
    <property type="entry name" value="Ribosomal_uS11"/>
    <property type="match status" value="1"/>
</dbReference>
<dbReference type="InterPro" id="IPR001971">
    <property type="entry name" value="Ribosomal_uS11"/>
</dbReference>
<dbReference type="InterPro" id="IPR019981">
    <property type="entry name" value="Ribosomal_uS11_bac-type"/>
</dbReference>
<dbReference type="InterPro" id="IPR018102">
    <property type="entry name" value="Ribosomal_uS11_CS"/>
</dbReference>
<dbReference type="InterPro" id="IPR036967">
    <property type="entry name" value="Ribosomal_uS11_sf"/>
</dbReference>
<dbReference type="NCBIfam" id="NF003698">
    <property type="entry name" value="PRK05309.1"/>
    <property type="match status" value="1"/>
</dbReference>
<dbReference type="NCBIfam" id="TIGR03632">
    <property type="entry name" value="uS11_bact"/>
    <property type="match status" value="1"/>
</dbReference>
<dbReference type="PANTHER" id="PTHR11759">
    <property type="entry name" value="40S RIBOSOMAL PROTEIN S14/30S RIBOSOMAL PROTEIN S11"/>
    <property type="match status" value="1"/>
</dbReference>
<dbReference type="Pfam" id="PF00411">
    <property type="entry name" value="Ribosomal_S11"/>
    <property type="match status" value="1"/>
</dbReference>
<dbReference type="PIRSF" id="PIRSF002131">
    <property type="entry name" value="Ribosomal_S11"/>
    <property type="match status" value="1"/>
</dbReference>
<dbReference type="SUPFAM" id="SSF53137">
    <property type="entry name" value="Translational machinery components"/>
    <property type="match status" value="1"/>
</dbReference>
<dbReference type="PROSITE" id="PS00054">
    <property type="entry name" value="RIBOSOMAL_S11"/>
    <property type="match status" value="1"/>
</dbReference>
<protein>
    <recommendedName>
        <fullName evidence="1">Small ribosomal subunit protein uS11</fullName>
    </recommendedName>
    <alternativeName>
        <fullName evidence="2">30S ribosomal protein S11</fullName>
    </alternativeName>
</protein>
<feature type="chain" id="PRO_1000165573" description="Small ribosomal subunit protein uS11">
    <location>
        <begin position="1"/>
        <end position="127"/>
    </location>
</feature>
<keyword id="KW-0687">Ribonucleoprotein</keyword>
<keyword id="KW-0689">Ribosomal protein</keyword>
<keyword id="KW-0694">RNA-binding</keyword>
<keyword id="KW-0699">rRNA-binding</keyword>
<organism>
    <name type="scientific">Streptococcus pneumoniae (strain P1031)</name>
    <dbReference type="NCBI Taxonomy" id="488223"/>
    <lineage>
        <taxon>Bacteria</taxon>
        <taxon>Bacillati</taxon>
        <taxon>Bacillota</taxon>
        <taxon>Bacilli</taxon>
        <taxon>Lactobacillales</taxon>
        <taxon>Streptococcaceae</taxon>
        <taxon>Streptococcus</taxon>
    </lineage>
</organism>
<comment type="function">
    <text evidence="1">Located on the platform of the 30S subunit, it bridges several disparate RNA helices of the 16S rRNA. Forms part of the Shine-Dalgarno cleft in the 70S ribosome.</text>
</comment>
<comment type="subunit">
    <text evidence="1">Part of the 30S ribosomal subunit. Interacts with proteins S7 and S18. Binds to IF-3.</text>
</comment>
<comment type="similarity">
    <text evidence="1">Belongs to the universal ribosomal protein uS11 family.</text>
</comment>
<proteinExistence type="inferred from homology"/>
<name>RS11_STRZP</name>
<evidence type="ECO:0000255" key="1">
    <source>
        <dbReference type="HAMAP-Rule" id="MF_01310"/>
    </source>
</evidence>
<evidence type="ECO:0000305" key="2"/>
<accession>C1CIC2</accession>
<gene>
    <name evidence="1" type="primary">rpsK</name>
    <name type="ordered locus">SPP_0285</name>
</gene>